<sequence>MRAIAIVLARSSSKRIKNKNIIDFFNKPMLAYPIEVALNSKLFEKVFISSDSMEYVNLAKNYGASFLNLRPKILADDRATTLEVMAYHMEELELKDEDIACCLYGASALLQEKHLKNAFETLNKNQNTDYVFTCSPFSASPYRSFSLENGVQMAFKEHSNTRTQDLKTLYHDAGLLYMGKAQAFKEMRPIFSQNSIALELSPLEVQDIAHFRRFRISQAQIQPFEKRMPVKILCDCFLTSGLGHVRRCEKILSFIEKLGVEASLYLHKQNNISAFLEGVGGNDFLITDSYCLNSKDFYLLKEKAKSLMVIEDTEHAKGFYPKNTKILNFTLNALKHYHHLSKDYQYYLGVGFYPVDARFIYDRPINTENKEVLITLGGSEQKTLKEIVKILENKNVNLHIISPYTPKNPPKNTHYYSPLNPLEFSSLMKSCACAISAAGQTLYELALSQTPSLILPIASNQIIQSKEFESLGIFKQTSLKTLAKDFENLQIQKNQAWAKNLVFGDKLEGALREFLEI</sequence>
<dbReference type="EC" id="2.7.7.81"/>
<dbReference type="EC" id="3.6.1.57"/>
<dbReference type="EMBL" id="AE000511">
    <property type="protein sequence ID" value="AAD07393.1"/>
    <property type="molecule type" value="Genomic_DNA"/>
</dbReference>
<dbReference type="PIR" id="F64560">
    <property type="entry name" value="F64560"/>
</dbReference>
<dbReference type="RefSeq" id="NP_207124.1">
    <property type="nucleotide sequence ID" value="NC_000915.1"/>
</dbReference>
<dbReference type="RefSeq" id="WP_001201399.1">
    <property type="nucleotide sequence ID" value="NC_018939.1"/>
</dbReference>
<dbReference type="SMR" id="O25093"/>
<dbReference type="DIP" id="DIP-3686N"/>
<dbReference type="IntAct" id="O25093">
    <property type="interactions" value="1"/>
</dbReference>
<dbReference type="MINT" id="O25093"/>
<dbReference type="STRING" id="85962.HP_0326"/>
<dbReference type="PaxDb" id="85962-C694_01650"/>
<dbReference type="EnsemblBacteria" id="AAD07393">
    <property type="protein sequence ID" value="AAD07393"/>
    <property type="gene ID" value="HP_0326"/>
</dbReference>
<dbReference type="KEGG" id="hpy:HP_0326"/>
<dbReference type="PATRIC" id="fig|85962.8.peg.340"/>
<dbReference type="eggNOG" id="COG3980">
    <property type="taxonomic scope" value="Bacteria"/>
</dbReference>
<dbReference type="InParanoid" id="O25093"/>
<dbReference type="OrthoDB" id="9805604at2"/>
<dbReference type="BioCyc" id="MetaCyc:HP0326-MONOMER"/>
<dbReference type="Proteomes" id="UP000000429">
    <property type="component" value="Chromosome"/>
</dbReference>
<dbReference type="GO" id="GO:0016787">
    <property type="term" value="F:hydrolase activity"/>
    <property type="evidence" value="ECO:0007669"/>
    <property type="project" value="UniProtKB-KW"/>
</dbReference>
<dbReference type="GO" id="GO:0046872">
    <property type="term" value="F:metal ion binding"/>
    <property type="evidence" value="ECO:0007669"/>
    <property type="project" value="UniProtKB-KW"/>
</dbReference>
<dbReference type="GO" id="GO:0008781">
    <property type="term" value="F:N-acylneuraminate cytidylyltransferase activity"/>
    <property type="evidence" value="ECO:0000318"/>
    <property type="project" value="GO_Central"/>
</dbReference>
<dbReference type="CDD" id="cd02513">
    <property type="entry name" value="CMP-NeuAc_Synthase"/>
    <property type="match status" value="1"/>
</dbReference>
<dbReference type="Gene3D" id="3.40.50.2000">
    <property type="entry name" value="Glycogen Phosphorylase B"/>
    <property type="match status" value="1"/>
</dbReference>
<dbReference type="Gene3D" id="3.90.550.10">
    <property type="entry name" value="Spore Coat Polysaccharide Biosynthesis Protein SpsA, Chain A"/>
    <property type="match status" value="1"/>
</dbReference>
<dbReference type="InterPro" id="IPR050793">
    <property type="entry name" value="CMP-NeuNAc_synthase"/>
</dbReference>
<dbReference type="InterPro" id="IPR003329">
    <property type="entry name" value="Cytidylyl_trans"/>
</dbReference>
<dbReference type="InterPro" id="IPR029044">
    <property type="entry name" value="Nucleotide-diphossugar_trans"/>
</dbReference>
<dbReference type="InterPro" id="IPR020039">
    <property type="entry name" value="PseF"/>
</dbReference>
<dbReference type="NCBIfam" id="TIGR03584">
    <property type="entry name" value="PseF"/>
    <property type="match status" value="1"/>
</dbReference>
<dbReference type="PANTHER" id="PTHR21485">
    <property type="entry name" value="HAD SUPERFAMILY MEMBERS CMAS AND KDSC"/>
    <property type="match status" value="1"/>
</dbReference>
<dbReference type="PANTHER" id="PTHR21485:SF6">
    <property type="entry name" value="N-ACYLNEURAMINATE CYTIDYLYLTRANSFERASE-RELATED"/>
    <property type="match status" value="1"/>
</dbReference>
<dbReference type="Pfam" id="PF02348">
    <property type="entry name" value="CTP_transf_3"/>
    <property type="match status" value="1"/>
</dbReference>
<dbReference type="SUPFAM" id="SSF53448">
    <property type="entry name" value="Nucleotide-diphospho-sugar transferases"/>
    <property type="match status" value="1"/>
</dbReference>
<dbReference type="SUPFAM" id="SSF53756">
    <property type="entry name" value="UDP-Glycosyltransferase/glycogen phosphorylase"/>
    <property type="match status" value="1"/>
</dbReference>
<organism>
    <name type="scientific">Helicobacter pylori (strain ATCC 700392 / 26695)</name>
    <name type="common">Campylobacter pylori</name>
    <dbReference type="NCBI Taxonomy" id="85962"/>
    <lineage>
        <taxon>Bacteria</taxon>
        <taxon>Pseudomonadati</taxon>
        <taxon>Campylobacterota</taxon>
        <taxon>Epsilonproteobacteria</taxon>
        <taxon>Campylobacterales</taxon>
        <taxon>Helicobacteraceae</taxon>
        <taxon>Helicobacter</taxon>
    </lineage>
</organism>
<feature type="chain" id="PRO_0000418936" description="Pseudaminic acid cytidylyltransferase and UDP-2,4-diacetamido-2,4,6-trideoxy-beta-L-altropyranose hydrolase">
    <location>
        <begin position="1"/>
        <end position="517"/>
    </location>
</feature>
<feature type="region of interest" description="Pseudaminic acid cytidylyltransferase">
    <location>
        <begin position="1"/>
        <end position="208"/>
    </location>
</feature>
<feature type="region of interest" description="UDP-2,4-diacetamido-2,4,6-trideoxy-beta-L-altropyranose hydrolase">
    <location>
        <begin position="209"/>
        <end position="517"/>
    </location>
</feature>
<feature type="active site" description="Proton acceptor; for UDP-2,4-diacetamido-2,4,6-trideoxy-beta-L-altropyranose hydrolase activity" evidence="1">
    <location>
        <position position="244"/>
    </location>
</feature>
<name>PSEFG_HELPY</name>
<reference key="1">
    <citation type="journal article" date="1997" name="Nature">
        <title>The complete genome sequence of the gastric pathogen Helicobacter pylori.</title>
        <authorList>
            <person name="Tomb J.-F."/>
            <person name="White O."/>
            <person name="Kerlavage A.R."/>
            <person name="Clayton R.A."/>
            <person name="Sutton G.G."/>
            <person name="Fleischmann R.D."/>
            <person name="Ketchum K.A."/>
            <person name="Klenk H.-P."/>
            <person name="Gill S.R."/>
            <person name="Dougherty B.A."/>
            <person name="Nelson K.E."/>
            <person name="Quackenbush J."/>
            <person name="Zhou L."/>
            <person name="Kirkness E.F."/>
            <person name="Peterson S.N."/>
            <person name="Loftus B.J."/>
            <person name="Richardson D.L."/>
            <person name="Dodson R.J."/>
            <person name="Khalak H.G."/>
            <person name="Glodek A."/>
            <person name="McKenney K."/>
            <person name="FitzGerald L.M."/>
            <person name="Lee N."/>
            <person name="Adams M.D."/>
            <person name="Hickey E.K."/>
            <person name="Berg D.E."/>
            <person name="Gocayne J.D."/>
            <person name="Utterback T.R."/>
            <person name="Peterson J.D."/>
            <person name="Kelley J.M."/>
            <person name="Cotton M.D."/>
            <person name="Weidman J.F."/>
            <person name="Fujii C."/>
            <person name="Bowman C."/>
            <person name="Watthey L."/>
            <person name="Wallin E."/>
            <person name="Hayes W.S."/>
            <person name="Borodovsky M."/>
            <person name="Karp P.D."/>
            <person name="Smith H.O."/>
            <person name="Fraser C.M."/>
            <person name="Venter J.C."/>
        </authorList>
    </citation>
    <scope>NUCLEOTIDE SEQUENCE [LARGE SCALE GENOMIC DNA]</scope>
    <source>
        <strain>ATCC 700392 / 26695</strain>
    </source>
</reference>
<reference key="2">
    <citation type="journal article" date="2006" name="Glycobiology">
        <title>Elucidation of the CMP-pseudaminic acid pathway in Helicobacter pylori: synthesis from UDP-N-acetylglucosamine by a single enzymatic reaction.</title>
        <authorList>
            <person name="Schoenhofen I.C."/>
            <person name="McNally D.J."/>
            <person name="Brisson J.R."/>
            <person name="Logan S.M."/>
        </authorList>
    </citation>
    <scope>PATHWAY</scope>
    <scope>FUNCTION</scope>
    <scope>COFACTOR</scope>
    <source>
        <strain>ATCC 700392 / 26695</strain>
    </source>
</reference>
<proteinExistence type="inferred from homology"/>
<accession>O25093</accession>
<protein>
    <recommendedName>
        <fullName>Pseudaminic acid cytidylyltransferase and UDP-2,4-diacetamido-2,4,6-trideoxy-beta-L-altropyranose hydrolase</fullName>
    </recommendedName>
    <domain>
        <recommendedName>
            <fullName>Pseudaminic acid cytidylyltransferase</fullName>
            <ecNumber>2.7.7.81</ecNumber>
        </recommendedName>
        <alternativeName>
            <fullName>Pseudaminic acid biosynthesis protein F</fullName>
            <shortName>PseF</shortName>
        </alternativeName>
        <alternativeName>
            <fullName>Pseudaminic acid cytidylyltransferase HP_0326A</fullName>
        </alternativeName>
    </domain>
    <domain>
        <recommendedName>
            <fullName>UDP-2,4-diacetamido-2,4,6-trideoxy-beta-L-altropyranose hydrolase</fullName>
            <ecNumber>3.6.1.57</ecNumber>
        </recommendedName>
        <alternativeName>
            <fullName>Pseudaminic acid biosynthesis protein G</fullName>
            <shortName>PseG</shortName>
        </alternativeName>
        <alternativeName>
            <fullName>UDP-2,4-diacetamido-2,4,6-trideoxy-beta-L-altropyranose hydrolase HP_0326B</fullName>
        </alternativeName>
    </domain>
</protein>
<gene>
    <name type="ordered locus">HP_0326</name>
</gene>
<comment type="function">
    <text evidence="2">Catalyzes the fourth and sixth steps in the biosynthesis of pseudaminic acid, a sialic-acid-like sugar that is used to modify flagellin. The C-terminus mediates the fourth step of the pathway and catalyzes the removal of UDP from C-1 of UDP-2,4-diacetamido-2,4,6-trideoxy-beta-L-altropyranose forming 2,4-diacetamido-2,4,6-trideoxy-beta-L-altropyranose. The N-terminal part mediates the last step of the pathway by mediating activation of pseudaminic acid with CMP by forming CMP-pseudaminic acid.</text>
</comment>
<comment type="catalytic activity">
    <reaction>
        <text>UDP-2,4-diacetamido-2,4,6-trideoxy-beta-L-altrose + H2O = 2,4-diacetamido-2,4,6-trideoxy-beta-L-altrose + UDP + H(+)</text>
        <dbReference type="Rhea" id="RHEA:31803"/>
        <dbReference type="ChEBI" id="CHEBI:15377"/>
        <dbReference type="ChEBI" id="CHEBI:15378"/>
        <dbReference type="ChEBI" id="CHEBI:58223"/>
        <dbReference type="ChEBI" id="CHEBI:63283"/>
        <dbReference type="ChEBI" id="CHEBI:63417"/>
        <dbReference type="EC" id="3.6.1.57"/>
    </reaction>
</comment>
<comment type="catalytic activity">
    <reaction>
        <text>pseudaminate + CTP = CMP-pseudaminate + diphosphate</text>
        <dbReference type="Rhea" id="RHEA:32083"/>
        <dbReference type="ChEBI" id="CHEBI:33019"/>
        <dbReference type="ChEBI" id="CHEBI:37563"/>
        <dbReference type="ChEBI" id="CHEBI:63282"/>
        <dbReference type="ChEBI" id="CHEBI:63680"/>
        <dbReference type="EC" id="2.7.7.81"/>
    </reaction>
</comment>
<comment type="cofactor">
    <cofactor evidence="2">
        <name>Mg(2+)</name>
        <dbReference type="ChEBI" id="CHEBI:18420"/>
    </cofactor>
    <text evidence="2">Mg(2+) is required for pseudaminic acid cytidylyltransferase activity.</text>
</comment>
<comment type="subunit">
    <text evidence="1">Monomer.</text>
</comment>
<comment type="miscellaneous">
    <text evidence="4">In publications, PseF (HP_0326A) and PseG (HP_0326B) are separated into 2 separate ORFs (PubMed:16751642). However, these 2 enzymes are fused into a single protein in strain ATCC 700392 / 26695.</text>
</comment>
<comment type="similarity">
    <text evidence="3">In the N-terminal section; belongs to the CMP-NeuNAc synthase family.</text>
</comment>
<comment type="similarity">
    <text evidence="3">In the C-terminal section; belongs to the PseG family.</text>
</comment>
<evidence type="ECO:0000250" key="1"/>
<evidence type="ECO:0000269" key="2">
    <source>
    </source>
</evidence>
<evidence type="ECO:0000305" key="3"/>
<evidence type="ECO:0000305" key="4">
    <source>
    </source>
</evidence>
<keyword id="KW-0378">Hydrolase</keyword>
<keyword id="KW-0460">Magnesium</keyword>
<keyword id="KW-0479">Metal-binding</keyword>
<keyword id="KW-0511">Multifunctional enzyme</keyword>
<keyword id="KW-0548">Nucleotidyltransferase</keyword>
<keyword id="KW-1185">Reference proteome</keyword>
<keyword id="KW-0808">Transferase</keyword>